<protein>
    <recommendedName>
        <fullName evidence="1">Polyribonucleotide nucleotidyltransferase</fullName>
        <ecNumber evidence="1">2.7.7.8</ecNumber>
    </recommendedName>
    <alternativeName>
        <fullName evidence="1">Polynucleotide phosphorylase</fullName>
        <shortName evidence="1">PNPase</shortName>
    </alternativeName>
</protein>
<comment type="function">
    <text evidence="1">Involved in mRNA degradation. Catalyzes the phosphorolysis of single-stranded polyribonucleotides processively in the 3'- to 5'-direction.</text>
</comment>
<comment type="catalytic activity">
    <reaction evidence="1">
        <text>RNA(n+1) + phosphate = RNA(n) + a ribonucleoside 5'-diphosphate</text>
        <dbReference type="Rhea" id="RHEA:22096"/>
        <dbReference type="Rhea" id="RHEA-COMP:14527"/>
        <dbReference type="Rhea" id="RHEA-COMP:17342"/>
        <dbReference type="ChEBI" id="CHEBI:43474"/>
        <dbReference type="ChEBI" id="CHEBI:57930"/>
        <dbReference type="ChEBI" id="CHEBI:140395"/>
        <dbReference type="EC" id="2.7.7.8"/>
    </reaction>
</comment>
<comment type="cofactor">
    <cofactor evidence="1">
        <name>Mg(2+)</name>
        <dbReference type="ChEBI" id="CHEBI:18420"/>
    </cofactor>
</comment>
<comment type="subcellular location">
    <subcellularLocation>
        <location evidence="1">Cytoplasm</location>
    </subcellularLocation>
</comment>
<comment type="similarity">
    <text evidence="1">Belongs to the polyribonucleotide nucleotidyltransferase family.</text>
</comment>
<dbReference type="EC" id="2.7.7.8" evidence="1"/>
<dbReference type="EMBL" id="AM747720">
    <property type="protein sequence ID" value="CAR52649.1"/>
    <property type="molecule type" value="Genomic_DNA"/>
</dbReference>
<dbReference type="SMR" id="B4E5M6"/>
<dbReference type="KEGG" id="bcj:BCAL2348"/>
<dbReference type="eggNOG" id="COG1185">
    <property type="taxonomic scope" value="Bacteria"/>
</dbReference>
<dbReference type="HOGENOM" id="CLU_004217_2_2_4"/>
<dbReference type="Proteomes" id="UP000001035">
    <property type="component" value="Chromosome 1"/>
</dbReference>
<dbReference type="GO" id="GO:0005829">
    <property type="term" value="C:cytosol"/>
    <property type="evidence" value="ECO:0007669"/>
    <property type="project" value="TreeGrafter"/>
</dbReference>
<dbReference type="GO" id="GO:0000175">
    <property type="term" value="F:3'-5'-RNA exonuclease activity"/>
    <property type="evidence" value="ECO:0007669"/>
    <property type="project" value="TreeGrafter"/>
</dbReference>
<dbReference type="GO" id="GO:0000287">
    <property type="term" value="F:magnesium ion binding"/>
    <property type="evidence" value="ECO:0007669"/>
    <property type="project" value="UniProtKB-UniRule"/>
</dbReference>
<dbReference type="GO" id="GO:0004654">
    <property type="term" value="F:polyribonucleotide nucleotidyltransferase activity"/>
    <property type="evidence" value="ECO:0007669"/>
    <property type="project" value="UniProtKB-UniRule"/>
</dbReference>
<dbReference type="GO" id="GO:0003723">
    <property type="term" value="F:RNA binding"/>
    <property type="evidence" value="ECO:0007669"/>
    <property type="project" value="UniProtKB-UniRule"/>
</dbReference>
<dbReference type="GO" id="GO:0006402">
    <property type="term" value="P:mRNA catabolic process"/>
    <property type="evidence" value="ECO:0007669"/>
    <property type="project" value="UniProtKB-UniRule"/>
</dbReference>
<dbReference type="GO" id="GO:0006396">
    <property type="term" value="P:RNA processing"/>
    <property type="evidence" value="ECO:0007669"/>
    <property type="project" value="InterPro"/>
</dbReference>
<dbReference type="CDD" id="cd02393">
    <property type="entry name" value="KH-I_PNPase"/>
    <property type="match status" value="1"/>
</dbReference>
<dbReference type="CDD" id="cd11363">
    <property type="entry name" value="RNase_PH_PNPase_1"/>
    <property type="match status" value="1"/>
</dbReference>
<dbReference type="CDD" id="cd11364">
    <property type="entry name" value="RNase_PH_PNPase_2"/>
    <property type="match status" value="1"/>
</dbReference>
<dbReference type="CDD" id="cd04472">
    <property type="entry name" value="S1_PNPase"/>
    <property type="match status" value="1"/>
</dbReference>
<dbReference type="FunFam" id="3.30.1370.10:FF:000001">
    <property type="entry name" value="Polyribonucleotide nucleotidyltransferase"/>
    <property type="match status" value="1"/>
</dbReference>
<dbReference type="FunFam" id="3.30.230.70:FF:000001">
    <property type="entry name" value="Polyribonucleotide nucleotidyltransferase"/>
    <property type="match status" value="1"/>
</dbReference>
<dbReference type="FunFam" id="3.30.230.70:FF:000002">
    <property type="entry name" value="Polyribonucleotide nucleotidyltransferase"/>
    <property type="match status" value="1"/>
</dbReference>
<dbReference type="FunFam" id="2.40.50.140:FF:000189">
    <property type="entry name" value="Polyribonucleotide nucleotidyltransferase, putative"/>
    <property type="match status" value="1"/>
</dbReference>
<dbReference type="Gene3D" id="3.30.230.70">
    <property type="entry name" value="GHMP Kinase, N-terminal domain"/>
    <property type="match status" value="2"/>
</dbReference>
<dbReference type="Gene3D" id="3.30.1370.10">
    <property type="entry name" value="K Homology domain, type 1"/>
    <property type="match status" value="1"/>
</dbReference>
<dbReference type="Gene3D" id="2.40.50.140">
    <property type="entry name" value="Nucleic acid-binding proteins"/>
    <property type="match status" value="1"/>
</dbReference>
<dbReference type="HAMAP" id="MF_01595">
    <property type="entry name" value="PNPase"/>
    <property type="match status" value="1"/>
</dbReference>
<dbReference type="InterPro" id="IPR001247">
    <property type="entry name" value="ExoRNase_PH_dom1"/>
</dbReference>
<dbReference type="InterPro" id="IPR015847">
    <property type="entry name" value="ExoRNase_PH_dom2"/>
</dbReference>
<dbReference type="InterPro" id="IPR036345">
    <property type="entry name" value="ExoRNase_PH_dom2_sf"/>
</dbReference>
<dbReference type="InterPro" id="IPR004087">
    <property type="entry name" value="KH_dom"/>
</dbReference>
<dbReference type="InterPro" id="IPR004088">
    <property type="entry name" value="KH_dom_type_1"/>
</dbReference>
<dbReference type="InterPro" id="IPR036612">
    <property type="entry name" value="KH_dom_type_1_sf"/>
</dbReference>
<dbReference type="InterPro" id="IPR012340">
    <property type="entry name" value="NA-bd_OB-fold"/>
</dbReference>
<dbReference type="InterPro" id="IPR012162">
    <property type="entry name" value="PNPase"/>
</dbReference>
<dbReference type="InterPro" id="IPR027408">
    <property type="entry name" value="PNPase/RNase_PH_dom_sf"/>
</dbReference>
<dbReference type="InterPro" id="IPR015848">
    <property type="entry name" value="PNPase_PH_RNA-bd_bac/org-type"/>
</dbReference>
<dbReference type="InterPro" id="IPR036456">
    <property type="entry name" value="PNPase_PH_RNA-bd_sf"/>
</dbReference>
<dbReference type="InterPro" id="IPR020568">
    <property type="entry name" value="Ribosomal_Su5_D2-typ_SF"/>
</dbReference>
<dbReference type="InterPro" id="IPR003029">
    <property type="entry name" value="S1_domain"/>
</dbReference>
<dbReference type="NCBIfam" id="TIGR03591">
    <property type="entry name" value="polynuc_phos"/>
    <property type="match status" value="1"/>
</dbReference>
<dbReference type="NCBIfam" id="NF008805">
    <property type="entry name" value="PRK11824.1"/>
    <property type="match status" value="1"/>
</dbReference>
<dbReference type="PANTHER" id="PTHR11252">
    <property type="entry name" value="POLYRIBONUCLEOTIDE NUCLEOTIDYLTRANSFERASE"/>
    <property type="match status" value="1"/>
</dbReference>
<dbReference type="PANTHER" id="PTHR11252:SF0">
    <property type="entry name" value="POLYRIBONUCLEOTIDE NUCLEOTIDYLTRANSFERASE 1, MITOCHONDRIAL"/>
    <property type="match status" value="1"/>
</dbReference>
<dbReference type="Pfam" id="PF00013">
    <property type="entry name" value="KH_1"/>
    <property type="match status" value="1"/>
</dbReference>
<dbReference type="Pfam" id="PF03726">
    <property type="entry name" value="PNPase"/>
    <property type="match status" value="1"/>
</dbReference>
<dbReference type="Pfam" id="PF01138">
    <property type="entry name" value="RNase_PH"/>
    <property type="match status" value="2"/>
</dbReference>
<dbReference type="Pfam" id="PF03725">
    <property type="entry name" value="RNase_PH_C"/>
    <property type="match status" value="2"/>
</dbReference>
<dbReference type="Pfam" id="PF00575">
    <property type="entry name" value="S1"/>
    <property type="match status" value="1"/>
</dbReference>
<dbReference type="PIRSF" id="PIRSF005499">
    <property type="entry name" value="PNPase"/>
    <property type="match status" value="1"/>
</dbReference>
<dbReference type="SMART" id="SM00322">
    <property type="entry name" value="KH"/>
    <property type="match status" value="1"/>
</dbReference>
<dbReference type="SMART" id="SM00316">
    <property type="entry name" value="S1"/>
    <property type="match status" value="1"/>
</dbReference>
<dbReference type="SUPFAM" id="SSF54791">
    <property type="entry name" value="Eukaryotic type KH-domain (KH-domain type I)"/>
    <property type="match status" value="1"/>
</dbReference>
<dbReference type="SUPFAM" id="SSF50249">
    <property type="entry name" value="Nucleic acid-binding proteins"/>
    <property type="match status" value="1"/>
</dbReference>
<dbReference type="SUPFAM" id="SSF46915">
    <property type="entry name" value="Polynucleotide phosphorylase/guanosine pentaphosphate synthase (PNPase/GPSI), domain 3"/>
    <property type="match status" value="1"/>
</dbReference>
<dbReference type="SUPFAM" id="SSF55666">
    <property type="entry name" value="Ribonuclease PH domain 2-like"/>
    <property type="match status" value="2"/>
</dbReference>
<dbReference type="SUPFAM" id="SSF54211">
    <property type="entry name" value="Ribosomal protein S5 domain 2-like"/>
    <property type="match status" value="2"/>
</dbReference>
<dbReference type="PROSITE" id="PS50084">
    <property type="entry name" value="KH_TYPE_1"/>
    <property type="match status" value="1"/>
</dbReference>
<dbReference type="PROSITE" id="PS50126">
    <property type="entry name" value="S1"/>
    <property type="match status" value="1"/>
</dbReference>
<name>PNP_BURCJ</name>
<keyword id="KW-0963">Cytoplasm</keyword>
<keyword id="KW-0460">Magnesium</keyword>
<keyword id="KW-0479">Metal-binding</keyword>
<keyword id="KW-0548">Nucleotidyltransferase</keyword>
<keyword id="KW-0694">RNA-binding</keyword>
<keyword id="KW-0808">Transferase</keyword>
<sequence length="713" mass="76822">MFNKVVKEFQWGQHKVRLETGEVARQASGAVIVDVEDTVVLATVVGAKSAKPGQDFFPLTVDYLEKTYSAGKIPGGFFRREGRPSEHETLTSRLIDRPLRPLFPEGFYNEVQVVIHVLSVNPEIPADIPALIGASAALAVSGLPFNGPVGAARVAYIDNAYVLNPTRDQIKASSLDLVVAGTERAVLMVESEADQLSEDVMLGAVVFGHEQMQIAIDAIHELVRDGGKPEWDWQPAPKNEALIARVTELAQNDLLAAYQLRDKQARSAKLKEVYAATSAKLEEDALAAGTVAADKATVGNILFDIEAKIVRSQILNGEPRIDGRDTRTVRPIEIRTGVLPRTHGSALFTRGETQALVVATLGTKGDEQIIDALEGEYRERFMLHYNMPPFATGETGRVGSPKRREIGHGRLAKRALVKCLPSADEFGYSIRVVSEITESNGSSSMASVCGGCLALMDAGVPMKAHVAGIAMGLILEGNKFAVLTDILGDEDHLGDMDFKVAGTEQGVTALQMDIKIQGITKEIMQVALAQAKEGRMHILGKMTSAVSGANTQLSEFAPRMITIKINPEKIRDVIGKGGSVIRALTEETGTTIDISDDGVVTIASTSSDGMAEAKKRIEQITAEIEVGQVYEGTVLKLLDFGAIVNLLPGKDGLLHISEIVNERVKDINDYLKEGQQVKVKVIQTDEKGRVRLSAKALLNEAAAAAQSDTPPQQ</sequence>
<accession>B4E5M6</accession>
<proteinExistence type="inferred from homology"/>
<reference key="1">
    <citation type="journal article" date="2009" name="J. Bacteriol.">
        <title>The genome of Burkholderia cenocepacia J2315, an epidemic pathogen of cystic fibrosis patients.</title>
        <authorList>
            <person name="Holden M.T."/>
            <person name="Seth-Smith H.M."/>
            <person name="Crossman L.C."/>
            <person name="Sebaihia M."/>
            <person name="Bentley S.D."/>
            <person name="Cerdeno-Tarraga A.M."/>
            <person name="Thomson N.R."/>
            <person name="Bason N."/>
            <person name="Quail M.A."/>
            <person name="Sharp S."/>
            <person name="Cherevach I."/>
            <person name="Churcher C."/>
            <person name="Goodhead I."/>
            <person name="Hauser H."/>
            <person name="Holroyd N."/>
            <person name="Mungall K."/>
            <person name="Scott P."/>
            <person name="Walker D."/>
            <person name="White B."/>
            <person name="Rose H."/>
            <person name="Iversen P."/>
            <person name="Mil-Homens D."/>
            <person name="Rocha E.P."/>
            <person name="Fialho A.M."/>
            <person name="Baldwin A."/>
            <person name="Dowson C."/>
            <person name="Barrell B.G."/>
            <person name="Govan J.R."/>
            <person name="Vandamme P."/>
            <person name="Hart C.A."/>
            <person name="Mahenthiralingam E."/>
            <person name="Parkhill J."/>
        </authorList>
    </citation>
    <scope>NUCLEOTIDE SEQUENCE [LARGE SCALE GENOMIC DNA]</scope>
    <source>
        <strain>ATCC BAA-245 / DSM 16553 / LMG 16656 / NCTC 13227 / J2315 / CF5610</strain>
    </source>
</reference>
<evidence type="ECO:0000255" key="1">
    <source>
        <dbReference type="HAMAP-Rule" id="MF_01595"/>
    </source>
</evidence>
<organism>
    <name type="scientific">Burkholderia cenocepacia (strain ATCC BAA-245 / DSM 16553 / LMG 16656 / NCTC 13227 / J2315 / CF5610)</name>
    <name type="common">Burkholderia cepacia (strain J2315)</name>
    <dbReference type="NCBI Taxonomy" id="216591"/>
    <lineage>
        <taxon>Bacteria</taxon>
        <taxon>Pseudomonadati</taxon>
        <taxon>Pseudomonadota</taxon>
        <taxon>Betaproteobacteria</taxon>
        <taxon>Burkholderiales</taxon>
        <taxon>Burkholderiaceae</taxon>
        <taxon>Burkholderia</taxon>
        <taxon>Burkholderia cepacia complex</taxon>
    </lineage>
</organism>
<gene>
    <name evidence="1" type="primary">pnp</name>
    <name type="ordered locus">BceJ2315_23080</name>
    <name type="ORF">BCAL2348</name>
</gene>
<feature type="chain" id="PRO_0000381871" description="Polyribonucleotide nucleotidyltransferase">
    <location>
        <begin position="1"/>
        <end position="713"/>
    </location>
</feature>
<feature type="domain" description="KH" evidence="1">
    <location>
        <begin position="558"/>
        <end position="617"/>
    </location>
</feature>
<feature type="domain" description="S1 motif" evidence="1">
    <location>
        <begin position="627"/>
        <end position="695"/>
    </location>
</feature>
<feature type="binding site" evidence="1">
    <location>
        <position position="491"/>
    </location>
    <ligand>
        <name>Mg(2+)</name>
        <dbReference type="ChEBI" id="CHEBI:18420"/>
    </ligand>
</feature>
<feature type="binding site" evidence="1">
    <location>
        <position position="497"/>
    </location>
    <ligand>
        <name>Mg(2+)</name>
        <dbReference type="ChEBI" id="CHEBI:18420"/>
    </ligand>
</feature>